<organism>
    <name type="scientific">Candida glabrata (strain ATCC 2001 / BCRC 20586 / JCM 3761 / NBRC 0622 / NRRL Y-65 / CBS 138)</name>
    <name type="common">Yeast</name>
    <name type="synonym">Nakaseomyces glabratus</name>
    <dbReference type="NCBI Taxonomy" id="284593"/>
    <lineage>
        <taxon>Eukaryota</taxon>
        <taxon>Fungi</taxon>
        <taxon>Dikarya</taxon>
        <taxon>Ascomycota</taxon>
        <taxon>Saccharomycotina</taxon>
        <taxon>Saccharomycetes</taxon>
        <taxon>Saccharomycetales</taxon>
        <taxon>Saccharomycetaceae</taxon>
        <taxon>Nakaseomyces</taxon>
    </lineage>
</organism>
<protein>
    <recommendedName>
        <fullName>Autophagy-related protein 29</fullName>
    </recommendedName>
</protein>
<evidence type="ECO:0000250" key="1"/>
<evidence type="ECO:0000256" key="2">
    <source>
        <dbReference type="SAM" id="MobiDB-lite"/>
    </source>
</evidence>
<evidence type="ECO:0000305" key="3"/>
<sequence length="217" mass="25202">MNSKNTIVYVKVKGKRPDGFVDPPVFEWNIQKEKKLWSLLSQLNDPDKEIDWALLAEGLDAPIYFLKRRCYELFTKHFELLRQQIDRKNKNALTDRSETPERDSTEEITKEVNFLNQLPVRTPGTIQEEFNEDNGPKDKNKTPDTTKKAIEQLKSSRILNFKGNKLDYNNREVGLTRYDSTYEKEGVHTEETESELSSSLGVSKSTLEEALMDKLQI</sequence>
<dbReference type="EMBL" id="CR380959">
    <property type="protein sequence ID" value="CAG62409.1"/>
    <property type="molecule type" value="Genomic_DNA"/>
</dbReference>
<dbReference type="RefSeq" id="XP_449433.1">
    <property type="nucleotide sequence ID" value="XM_449433.1"/>
</dbReference>
<dbReference type="SMR" id="Q6FK11"/>
<dbReference type="FunCoup" id="Q6FK11">
    <property type="interactions" value="79"/>
</dbReference>
<dbReference type="STRING" id="284593.Q6FK11"/>
<dbReference type="EnsemblFungi" id="CAGL0M02013g-T">
    <property type="protein sequence ID" value="CAGL0M02013g-T-p1"/>
    <property type="gene ID" value="CAGL0M02013g"/>
</dbReference>
<dbReference type="KEGG" id="cgr:2891759"/>
<dbReference type="CGD" id="CAL0136891">
    <property type="gene designation" value="CAGL0M02013g"/>
</dbReference>
<dbReference type="VEuPathDB" id="FungiDB:CAGL0M02013g"/>
<dbReference type="eggNOG" id="ENOG502S1W0">
    <property type="taxonomic scope" value="Eukaryota"/>
</dbReference>
<dbReference type="HOGENOM" id="CLU_121102_0_0_1"/>
<dbReference type="InParanoid" id="Q6FK11"/>
<dbReference type="OMA" id="RKSEINW"/>
<dbReference type="Proteomes" id="UP000002428">
    <property type="component" value="Chromosome M"/>
</dbReference>
<dbReference type="GO" id="GO:1990316">
    <property type="term" value="C:Atg1/ULK1 kinase complex"/>
    <property type="evidence" value="ECO:0007669"/>
    <property type="project" value="EnsemblFungi"/>
</dbReference>
<dbReference type="GO" id="GO:0000407">
    <property type="term" value="C:phagophore assembly site"/>
    <property type="evidence" value="ECO:0007669"/>
    <property type="project" value="UniProtKB-SubCell"/>
</dbReference>
<dbReference type="GO" id="GO:0000149">
    <property type="term" value="F:SNARE binding"/>
    <property type="evidence" value="ECO:0007669"/>
    <property type="project" value="EnsemblFungi"/>
</dbReference>
<dbReference type="GO" id="GO:0000422">
    <property type="term" value="P:autophagy of mitochondrion"/>
    <property type="evidence" value="ECO:0007669"/>
    <property type="project" value="EnsemblFungi"/>
</dbReference>
<dbReference type="GO" id="GO:0006995">
    <property type="term" value="P:cellular response to nitrogen starvation"/>
    <property type="evidence" value="ECO:0007669"/>
    <property type="project" value="EnsemblFungi"/>
</dbReference>
<dbReference type="GO" id="GO:0034727">
    <property type="term" value="P:piecemeal microautophagy of the nucleus"/>
    <property type="evidence" value="ECO:0007669"/>
    <property type="project" value="EnsemblFungi"/>
</dbReference>
<dbReference type="GO" id="GO:0034497">
    <property type="term" value="P:protein localization to phagophore assembly site"/>
    <property type="evidence" value="ECO:0007669"/>
    <property type="project" value="EnsemblFungi"/>
</dbReference>
<dbReference type="GO" id="GO:0015031">
    <property type="term" value="P:protein transport"/>
    <property type="evidence" value="ECO:0007669"/>
    <property type="project" value="UniProtKB-KW"/>
</dbReference>
<dbReference type="Gene3D" id="1.10.10.2570">
    <property type="match status" value="1"/>
</dbReference>
<dbReference type="InterPro" id="IPR039113">
    <property type="entry name" value="ATG29"/>
</dbReference>
<dbReference type="InterPro" id="IPR040666">
    <property type="entry name" value="Atg29_N"/>
</dbReference>
<dbReference type="InterPro" id="IPR039362">
    <property type="entry name" value="ATG29_sf"/>
</dbReference>
<dbReference type="PANTHER" id="PTHR40012">
    <property type="entry name" value="AUTOPHAGY-RELATED PROTEIN 29"/>
    <property type="match status" value="1"/>
</dbReference>
<dbReference type="PANTHER" id="PTHR40012:SF1">
    <property type="entry name" value="AUTOPHAGY-RELATED PROTEIN 29"/>
    <property type="match status" value="1"/>
</dbReference>
<dbReference type="Pfam" id="PF18388">
    <property type="entry name" value="ATG29_N"/>
    <property type="match status" value="1"/>
</dbReference>
<gene>
    <name type="primary">ATG29</name>
    <name type="ordered locus">CAGL0M02013g</name>
</gene>
<keyword id="KW-0072">Autophagy</keyword>
<keyword id="KW-0653">Protein transport</keyword>
<keyword id="KW-1185">Reference proteome</keyword>
<keyword id="KW-0813">Transport</keyword>
<comment type="function">
    <text evidence="1">Plays a role in autophagy. Functions at the preautophagosomal structure (PAS) in order to form normal autophagosomes under starvation conditions. Also plays a role in mitophagy and regulation of filamentous growth (By similarity).</text>
</comment>
<comment type="subcellular location">
    <subcellularLocation>
        <location evidence="1">Preautophagosomal structure</location>
    </subcellularLocation>
    <text evidence="1">Also localizes to other perivacuolar punctate structures.</text>
</comment>
<comment type="similarity">
    <text evidence="3">Belongs to the ATG29 family.</text>
</comment>
<accession>Q6FK11</accession>
<proteinExistence type="inferred from homology"/>
<name>ATG29_CANGA</name>
<feature type="chain" id="PRO_0000318057" description="Autophagy-related protein 29">
    <location>
        <begin position="1"/>
        <end position="217"/>
    </location>
</feature>
<feature type="region of interest" description="Disordered" evidence="2">
    <location>
        <begin position="126"/>
        <end position="147"/>
    </location>
</feature>
<feature type="region of interest" description="Disordered" evidence="2">
    <location>
        <begin position="184"/>
        <end position="203"/>
    </location>
</feature>
<feature type="compositionally biased region" description="Basic and acidic residues" evidence="2">
    <location>
        <begin position="134"/>
        <end position="147"/>
    </location>
</feature>
<reference key="1">
    <citation type="journal article" date="2004" name="Nature">
        <title>Genome evolution in yeasts.</title>
        <authorList>
            <person name="Dujon B."/>
            <person name="Sherman D."/>
            <person name="Fischer G."/>
            <person name="Durrens P."/>
            <person name="Casaregola S."/>
            <person name="Lafontaine I."/>
            <person name="de Montigny J."/>
            <person name="Marck C."/>
            <person name="Neuveglise C."/>
            <person name="Talla E."/>
            <person name="Goffard N."/>
            <person name="Frangeul L."/>
            <person name="Aigle M."/>
            <person name="Anthouard V."/>
            <person name="Babour A."/>
            <person name="Barbe V."/>
            <person name="Barnay S."/>
            <person name="Blanchin S."/>
            <person name="Beckerich J.-M."/>
            <person name="Beyne E."/>
            <person name="Bleykasten C."/>
            <person name="Boisrame A."/>
            <person name="Boyer J."/>
            <person name="Cattolico L."/>
            <person name="Confanioleri F."/>
            <person name="de Daruvar A."/>
            <person name="Despons L."/>
            <person name="Fabre E."/>
            <person name="Fairhead C."/>
            <person name="Ferry-Dumazet H."/>
            <person name="Groppi A."/>
            <person name="Hantraye F."/>
            <person name="Hennequin C."/>
            <person name="Jauniaux N."/>
            <person name="Joyet P."/>
            <person name="Kachouri R."/>
            <person name="Kerrest A."/>
            <person name="Koszul R."/>
            <person name="Lemaire M."/>
            <person name="Lesur I."/>
            <person name="Ma L."/>
            <person name="Muller H."/>
            <person name="Nicaud J.-M."/>
            <person name="Nikolski M."/>
            <person name="Oztas S."/>
            <person name="Ozier-Kalogeropoulos O."/>
            <person name="Pellenz S."/>
            <person name="Potier S."/>
            <person name="Richard G.-F."/>
            <person name="Straub M.-L."/>
            <person name="Suleau A."/>
            <person name="Swennen D."/>
            <person name="Tekaia F."/>
            <person name="Wesolowski-Louvel M."/>
            <person name="Westhof E."/>
            <person name="Wirth B."/>
            <person name="Zeniou-Meyer M."/>
            <person name="Zivanovic Y."/>
            <person name="Bolotin-Fukuhara M."/>
            <person name="Thierry A."/>
            <person name="Bouchier C."/>
            <person name="Caudron B."/>
            <person name="Scarpelli C."/>
            <person name="Gaillardin C."/>
            <person name="Weissenbach J."/>
            <person name="Wincker P."/>
            <person name="Souciet J.-L."/>
        </authorList>
    </citation>
    <scope>NUCLEOTIDE SEQUENCE [LARGE SCALE GENOMIC DNA]</scope>
    <source>
        <strain>ATCC 2001 / BCRC 20586 / JCM 3761 / NBRC 0622 / NRRL Y-65 / CBS 138</strain>
    </source>
</reference>